<dbReference type="EC" id="3.1.26.5" evidence="1"/>
<dbReference type="EMBL" id="CP000909">
    <property type="protein sequence ID" value="ABY33374.1"/>
    <property type="molecule type" value="Genomic_DNA"/>
</dbReference>
<dbReference type="RefSeq" id="WP_012256030.1">
    <property type="nucleotide sequence ID" value="NC_010175.1"/>
</dbReference>
<dbReference type="RefSeq" id="YP_001633763.1">
    <property type="nucleotide sequence ID" value="NC_010175.1"/>
</dbReference>
<dbReference type="SMR" id="A9WBG7"/>
<dbReference type="STRING" id="324602.Caur_0120"/>
<dbReference type="EnsemblBacteria" id="ABY33374">
    <property type="protein sequence ID" value="ABY33374"/>
    <property type="gene ID" value="Caur_0120"/>
</dbReference>
<dbReference type="KEGG" id="cau:Caur_0120"/>
<dbReference type="PATRIC" id="fig|324602.8.peg.137"/>
<dbReference type="eggNOG" id="COG0594">
    <property type="taxonomic scope" value="Bacteria"/>
</dbReference>
<dbReference type="HOGENOM" id="CLU_117179_9_4_0"/>
<dbReference type="InParanoid" id="A9WBG7"/>
<dbReference type="Proteomes" id="UP000002008">
    <property type="component" value="Chromosome"/>
</dbReference>
<dbReference type="GO" id="GO:0030677">
    <property type="term" value="C:ribonuclease P complex"/>
    <property type="evidence" value="ECO:0000318"/>
    <property type="project" value="GO_Central"/>
</dbReference>
<dbReference type="GO" id="GO:0042781">
    <property type="term" value="F:3'-tRNA processing endoribonuclease activity"/>
    <property type="evidence" value="ECO:0000318"/>
    <property type="project" value="GO_Central"/>
</dbReference>
<dbReference type="GO" id="GO:0004526">
    <property type="term" value="F:ribonuclease P activity"/>
    <property type="evidence" value="ECO:0000318"/>
    <property type="project" value="GO_Central"/>
</dbReference>
<dbReference type="GO" id="GO:0000049">
    <property type="term" value="F:tRNA binding"/>
    <property type="evidence" value="ECO:0007669"/>
    <property type="project" value="UniProtKB-UniRule"/>
</dbReference>
<dbReference type="GO" id="GO:0042780">
    <property type="term" value="P:tRNA 3'-end processing"/>
    <property type="evidence" value="ECO:0000318"/>
    <property type="project" value="GO_Central"/>
</dbReference>
<dbReference type="GO" id="GO:0001682">
    <property type="term" value="P:tRNA 5'-leader removal"/>
    <property type="evidence" value="ECO:0007669"/>
    <property type="project" value="UniProtKB-UniRule"/>
</dbReference>
<dbReference type="Gene3D" id="3.30.230.10">
    <property type="match status" value="1"/>
</dbReference>
<dbReference type="HAMAP" id="MF_00227">
    <property type="entry name" value="RNase_P"/>
    <property type="match status" value="1"/>
</dbReference>
<dbReference type="InterPro" id="IPR020568">
    <property type="entry name" value="Ribosomal_Su5_D2-typ_SF"/>
</dbReference>
<dbReference type="InterPro" id="IPR014721">
    <property type="entry name" value="Ribsml_uS5_D2-typ_fold_subgr"/>
</dbReference>
<dbReference type="InterPro" id="IPR000100">
    <property type="entry name" value="RNase_P"/>
</dbReference>
<dbReference type="InterPro" id="IPR020539">
    <property type="entry name" value="RNase_P_CS"/>
</dbReference>
<dbReference type="NCBIfam" id="TIGR00188">
    <property type="entry name" value="rnpA"/>
    <property type="match status" value="1"/>
</dbReference>
<dbReference type="PANTHER" id="PTHR33992">
    <property type="entry name" value="RIBONUCLEASE P PROTEIN COMPONENT"/>
    <property type="match status" value="1"/>
</dbReference>
<dbReference type="PANTHER" id="PTHR33992:SF1">
    <property type="entry name" value="RIBONUCLEASE P PROTEIN COMPONENT"/>
    <property type="match status" value="1"/>
</dbReference>
<dbReference type="Pfam" id="PF00825">
    <property type="entry name" value="Ribonuclease_P"/>
    <property type="match status" value="1"/>
</dbReference>
<dbReference type="SUPFAM" id="SSF54211">
    <property type="entry name" value="Ribosomal protein S5 domain 2-like"/>
    <property type="match status" value="1"/>
</dbReference>
<dbReference type="PROSITE" id="PS00648">
    <property type="entry name" value="RIBONUCLEASE_P"/>
    <property type="match status" value="1"/>
</dbReference>
<accession>A9WBG7</accession>
<protein>
    <recommendedName>
        <fullName evidence="1">Ribonuclease P protein component</fullName>
        <shortName evidence="1">RNase P protein</shortName>
        <shortName evidence="1">RNaseP protein</shortName>
        <ecNumber evidence="1">3.1.26.5</ecNumber>
    </recommendedName>
    <alternativeName>
        <fullName evidence="1">Protein C5</fullName>
    </alternativeName>
</protein>
<name>RNPA_CHLAA</name>
<gene>
    <name evidence="1" type="primary">rnpA</name>
    <name type="ordered locus">Caur_0120</name>
</gene>
<keyword id="KW-0255">Endonuclease</keyword>
<keyword id="KW-0378">Hydrolase</keyword>
<keyword id="KW-0540">Nuclease</keyword>
<keyword id="KW-1185">Reference proteome</keyword>
<keyword id="KW-0694">RNA-binding</keyword>
<keyword id="KW-0819">tRNA processing</keyword>
<organism>
    <name type="scientific">Chloroflexus aurantiacus (strain ATCC 29366 / DSM 635 / J-10-fl)</name>
    <dbReference type="NCBI Taxonomy" id="324602"/>
    <lineage>
        <taxon>Bacteria</taxon>
        <taxon>Bacillati</taxon>
        <taxon>Chloroflexota</taxon>
        <taxon>Chloroflexia</taxon>
        <taxon>Chloroflexales</taxon>
        <taxon>Chloroflexineae</taxon>
        <taxon>Chloroflexaceae</taxon>
        <taxon>Chloroflexus</taxon>
    </lineage>
</organism>
<sequence length="135" mass="15604">MRRAYRLRRPEQFRRVRQEGRTFTSPWLILTVAPARRRTLRCGFVVSRRVGGAVQRNRARRRVREAVRLLLPRLTAGYDMVFTIRTPEVIDAPFTQLQDDITALLRQACLLPAPTNETVSPVSDTPLPQHERGSQ</sequence>
<comment type="function">
    <text evidence="1">RNaseP catalyzes the removal of the 5'-leader sequence from pre-tRNA to produce the mature 5'-terminus. It can also cleave other RNA substrates such as 4.5S RNA. The protein component plays an auxiliary but essential role in vivo by binding to the 5'-leader sequence and broadening the substrate specificity of the ribozyme.</text>
</comment>
<comment type="catalytic activity">
    <reaction evidence="1">
        <text>Endonucleolytic cleavage of RNA, removing 5'-extranucleotides from tRNA precursor.</text>
        <dbReference type="EC" id="3.1.26.5"/>
    </reaction>
</comment>
<comment type="subunit">
    <text evidence="1">Consists of a catalytic RNA component (M1 or rnpB) and a protein subunit.</text>
</comment>
<comment type="similarity">
    <text evidence="1">Belongs to the RnpA family.</text>
</comment>
<proteinExistence type="inferred from homology"/>
<evidence type="ECO:0000255" key="1">
    <source>
        <dbReference type="HAMAP-Rule" id="MF_00227"/>
    </source>
</evidence>
<evidence type="ECO:0000256" key="2">
    <source>
        <dbReference type="SAM" id="MobiDB-lite"/>
    </source>
</evidence>
<reference key="1">
    <citation type="journal article" date="2011" name="BMC Genomics">
        <title>Complete genome sequence of the filamentous anoxygenic phototrophic bacterium Chloroflexus aurantiacus.</title>
        <authorList>
            <person name="Tang K.H."/>
            <person name="Barry K."/>
            <person name="Chertkov O."/>
            <person name="Dalin E."/>
            <person name="Han C.S."/>
            <person name="Hauser L.J."/>
            <person name="Honchak B.M."/>
            <person name="Karbach L.E."/>
            <person name="Land M.L."/>
            <person name="Lapidus A."/>
            <person name="Larimer F.W."/>
            <person name="Mikhailova N."/>
            <person name="Pitluck S."/>
            <person name="Pierson B.K."/>
            <person name="Blankenship R.E."/>
        </authorList>
    </citation>
    <scope>NUCLEOTIDE SEQUENCE [LARGE SCALE GENOMIC DNA]</scope>
    <source>
        <strain>ATCC 29366 / DSM 635 / J-10-fl</strain>
    </source>
</reference>
<feature type="chain" id="PRO_1000078191" description="Ribonuclease P protein component">
    <location>
        <begin position="1"/>
        <end position="135"/>
    </location>
</feature>
<feature type="region of interest" description="Disordered" evidence="2">
    <location>
        <begin position="115"/>
        <end position="135"/>
    </location>
</feature>